<sequence>MRIVYDDVRDLKNIVETLTKFIDEGLFEIGQDGIRLVAVDKAHVSLINIELYKELFKEYEVEDEFKFGFNSQYLAKILSIAKRKEEISIESDSPERVKITLGGALNRVFIINNIQVSPPEVPEVNLEFEVKASLSSKAFKTTINEISAVTDTVDIIAVEDKVILKGEGKEGSQIENEFSKDTGAISDMEFKNEAKSPYDVNYLSDILSLTNLSDYTRLAFSTEKPLELEFNMEGGGKVTYLLAPKLS</sequence>
<accession>Q4JAI6</accession>
<reference key="1">
    <citation type="journal article" date="2005" name="J. Bacteriol.">
        <title>The genome of Sulfolobus acidocaldarius, a model organism of the Crenarchaeota.</title>
        <authorList>
            <person name="Chen L."/>
            <person name="Bruegger K."/>
            <person name="Skovgaard M."/>
            <person name="Redder P."/>
            <person name="She Q."/>
            <person name="Torarinsson E."/>
            <person name="Greve B."/>
            <person name="Awayez M."/>
            <person name="Zibat A."/>
            <person name="Klenk H.-P."/>
            <person name="Garrett R.A."/>
        </authorList>
    </citation>
    <scope>NUCLEOTIDE SEQUENCE [LARGE SCALE GENOMIC DNA]</scope>
    <source>
        <strain>ATCC 33909 / DSM 639 / JCM 8929 / NBRC 15157 / NCIMB 11770</strain>
    </source>
</reference>
<gene>
    <name evidence="1" type="primary">pcn1</name>
    <name type="ordered locus">Saci_0826</name>
</gene>
<organism>
    <name type="scientific">Sulfolobus acidocaldarius (strain ATCC 33909 / DSM 639 / JCM 8929 / NBRC 15157 / NCIMB 11770)</name>
    <dbReference type="NCBI Taxonomy" id="330779"/>
    <lineage>
        <taxon>Archaea</taxon>
        <taxon>Thermoproteota</taxon>
        <taxon>Thermoprotei</taxon>
        <taxon>Sulfolobales</taxon>
        <taxon>Sulfolobaceae</taxon>
        <taxon>Sulfolobus</taxon>
    </lineage>
</organism>
<proteinExistence type="inferred from homology"/>
<feature type="chain" id="PRO_0000149210" description="DNA polymerase sliding clamp 1">
    <location>
        <begin position="1"/>
        <end position="247"/>
    </location>
</feature>
<dbReference type="EMBL" id="CP000077">
    <property type="protein sequence ID" value="AAY80192.1"/>
    <property type="status" value="ALT_INIT"/>
    <property type="molecule type" value="Genomic_DNA"/>
</dbReference>
<dbReference type="SMR" id="Q4JAI6"/>
<dbReference type="STRING" id="330779.Saci_0826"/>
<dbReference type="KEGG" id="sai:Saci_0826"/>
<dbReference type="PATRIC" id="fig|330779.12.peg.790"/>
<dbReference type="eggNOG" id="arCOG00488">
    <property type="taxonomic scope" value="Archaea"/>
</dbReference>
<dbReference type="HOGENOM" id="CLU_043978_1_0_2"/>
<dbReference type="Proteomes" id="UP000001018">
    <property type="component" value="Chromosome"/>
</dbReference>
<dbReference type="GO" id="GO:0003677">
    <property type="term" value="F:DNA binding"/>
    <property type="evidence" value="ECO:0007669"/>
    <property type="project" value="UniProtKB-UniRule"/>
</dbReference>
<dbReference type="GO" id="GO:0030337">
    <property type="term" value="F:DNA polymerase processivity factor activity"/>
    <property type="evidence" value="ECO:0007669"/>
    <property type="project" value="UniProtKB-UniRule"/>
</dbReference>
<dbReference type="GO" id="GO:0006272">
    <property type="term" value="P:leading strand elongation"/>
    <property type="evidence" value="ECO:0007669"/>
    <property type="project" value="TreeGrafter"/>
</dbReference>
<dbReference type="GO" id="GO:0006275">
    <property type="term" value="P:regulation of DNA replication"/>
    <property type="evidence" value="ECO:0007669"/>
    <property type="project" value="UniProtKB-UniRule"/>
</dbReference>
<dbReference type="CDD" id="cd00577">
    <property type="entry name" value="PCNA"/>
    <property type="match status" value="1"/>
</dbReference>
<dbReference type="Gene3D" id="3.70.10.10">
    <property type="match status" value="1"/>
</dbReference>
<dbReference type="HAMAP" id="MF_00317">
    <property type="entry name" value="DNApol_clamp_arch"/>
    <property type="match status" value="1"/>
</dbReference>
<dbReference type="InterPro" id="IPR046938">
    <property type="entry name" value="DNA_clamp_sf"/>
</dbReference>
<dbReference type="InterPro" id="IPR000730">
    <property type="entry name" value="Pr_cel_nuc_antig"/>
</dbReference>
<dbReference type="InterPro" id="IPR022649">
    <property type="entry name" value="Pr_cel_nuc_antig_C"/>
</dbReference>
<dbReference type="InterPro" id="IPR022659">
    <property type="entry name" value="Pr_cel_nuc_antig_CS"/>
</dbReference>
<dbReference type="InterPro" id="IPR022648">
    <property type="entry name" value="Pr_cel_nuc_antig_N"/>
</dbReference>
<dbReference type="NCBIfam" id="TIGR00590">
    <property type="entry name" value="pcna"/>
    <property type="match status" value="1"/>
</dbReference>
<dbReference type="NCBIfam" id="NF002220">
    <property type="entry name" value="PRK01115.1-3"/>
    <property type="match status" value="1"/>
</dbReference>
<dbReference type="PANTHER" id="PTHR11352">
    <property type="entry name" value="PROLIFERATING CELL NUCLEAR ANTIGEN"/>
    <property type="match status" value="1"/>
</dbReference>
<dbReference type="PANTHER" id="PTHR11352:SF0">
    <property type="entry name" value="PROLIFERATING CELL NUCLEAR ANTIGEN"/>
    <property type="match status" value="1"/>
</dbReference>
<dbReference type="Pfam" id="PF02747">
    <property type="entry name" value="PCNA_C"/>
    <property type="match status" value="1"/>
</dbReference>
<dbReference type="Pfam" id="PF00705">
    <property type="entry name" value="PCNA_N"/>
    <property type="match status" value="1"/>
</dbReference>
<dbReference type="PRINTS" id="PR00339">
    <property type="entry name" value="PCNACYCLIN"/>
</dbReference>
<dbReference type="SUPFAM" id="SSF55979">
    <property type="entry name" value="DNA clamp"/>
    <property type="match status" value="2"/>
</dbReference>
<dbReference type="PROSITE" id="PS01251">
    <property type="entry name" value="PCNA_1"/>
    <property type="match status" value="1"/>
</dbReference>
<comment type="function">
    <text evidence="1">Sliding clamp subunit that acts as a moving platform for DNA processing. Responsible for tethering the catalytic subunit of DNA polymerase and other proteins to DNA during high-speed replication.</text>
</comment>
<comment type="subunit">
    <text evidence="1">Homotrimer. The subunits circularize to form a toroid; DNA passes through its center. Replication factor C (RFC) is required to load the toroid on the DNA.</text>
</comment>
<comment type="similarity">
    <text evidence="1">Belongs to the PCNA family.</text>
</comment>
<comment type="sequence caution" evidence="2">
    <conflict type="erroneous initiation">
        <sequence resource="EMBL-CDS" id="AAY80192"/>
    </conflict>
    <text>Extended N-terminus.</text>
</comment>
<evidence type="ECO:0000255" key="1">
    <source>
        <dbReference type="HAMAP-Rule" id="MF_00317"/>
    </source>
</evidence>
<evidence type="ECO:0000305" key="2"/>
<keyword id="KW-0235">DNA replication</keyword>
<keyword id="KW-0238">DNA-binding</keyword>
<keyword id="KW-1185">Reference proteome</keyword>
<name>PCNA1_SULAC</name>
<protein>
    <recommendedName>
        <fullName evidence="1">DNA polymerase sliding clamp 1</fullName>
    </recommendedName>
    <alternativeName>
        <fullName evidence="1">Proliferating cell nuclear antigen homolog 1</fullName>
        <shortName evidence="1">PCNA 1</shortName>
    </alternativeName>
</protein>